<comment type="function">
    <text evidence="1">Required for the first step of histidine biosynthesis. May allow the feedback regulation of ATP phosphoribosyltransferase activity by histidine.</text>
</comment>
<comment type="pathway">
    <text evidence="1">Amino-acid biosynthesis; L-histidine biosynthesis; L-histidine from 5-phospho-alpha-D-ribose 1-diphosphate: step 1/9.</text>
</comment>
<comment type="subunit">
    <text evidence="1">Heteromultimer composed of HisG and HisZ subunits.</text>
</comment>
<comment type="subcellular location">
    <subcellularLocation>
        <location evidence="1">Cytoplasm</location>
    </subcellularLocation>
</comment>
<comment type="miscellaneous">
    <text>This function is generally fulfilled by the C-terminal part of HisG, which is missing in some bacteria such as this one.</text>
</comment>
<comment type="similarity">
    <text evidence="1">Belongs to the class-II aminoacyl-tRNA synthetase family. HisZ subfamily.</text>
</comment>
<name>HISZ_BURMA</name>
<reference key="1">
    <citation type="journal article" date="2004" name="Proc. Natl. Acad. Sci. U.S.A.">
        <title>Structural flexibility in the Burkholderia mallei genome.</title>
        <authorList>
            <person name="Nierman W.C."/>
            <person name="DeShazer D."/>
            <person name="Kim H.S."/>
            <person name="Tettelin H."/>
            <person name="Nelson K.E."/>
            <person name="Feldblyum T.V."/>
            <person name="Ulrich R.L."/>
            <person name="Ronning C.M."/>
            <person name="Brinkac L.M."/>
            <person name="Daugherty S.C."/>
            <person name="Davidsen T.D."/>
            <person name="DeBoy R.T."/>
            <person name="Dimitrov G."/>
            <person name="Dodson R.J."/>
            <person name="Durkin A.S."/>
            <person name="Gwinn M.L."/>
            <person name="Haft D.H."/>
            <person name="Khouri H.M."/>
            <person name="Kolonay J.F."/>
            <person name="Madupu R."/>
            <person name="Mohammoud Y."/>
            <person name="Nelson W.C."/>
            <person name="Radune D."/>
            <person name="Romero C.M."/>
            <person name="Sarria S."/>
            <person name="Selengut J."/>
            <person name="Shamblin C."/>
            <person name="Sullivan S.A."/>
            <person name="White O."/>
            <person name="Yu Y."/>
            <person name="Zafar N."/>
            <person name="Zhou L."/>
            <person name="Fraser C.M."/>
        </authorList>
    </citation>
    <scope>NUCLEOTIDE SEQUENCE [LARGE SCALE GENOMIC DNA]</scope>
    <source>
        <strain>ATCC 23344</strain>
    </source>
</reference>
<protein>
    <recommendedName>
        <fullName evidence="1">ATP phosphoribosyltransferase regulatory subunit</fullName>
    </recommendedName>
</protein>
<sequence length="382" mass="41779">MSTWLLPENIADVLPSEARKIEELRRRLLDRFRSYGYEMVMPPLLEYLESLLTSGGNELRLRTFKLVDQVSGRTLGLRADMTPQVARIDAHLLNRQGVTRLCYAGPVLHTRPRGLHASREQLQIGAEIYGHAGLEADQEIQQLMLDALHLTGLKKIRLDLCHAGVLAALFARDAAAAERGEALYEALAGKDVPRLNELTDDLGADTRAALRALPRLYGDASVLDDARRLLPALPEIARALDDLAHLAAQVKDAEVAIDLADLRGYAYHSGAMFAAYVDGVPNAVAHGGRYDHVGQAYGRARPATGFSLDLREIARISPVEARGAAILAPWKQDDALRAAVGALRDAGEVVIQALPGHDHVLDEFACDRALVERDGAWVIEPR</sequence>
<feature type="chain" id="PRO_0000242826" description="ATP phosphoribosyltransferase regulatory subunit">
    <location>
        <begin position="1"/>
        <end position="382"/>
    </location>
</feature>
<dbReference type="EMBL" id="CP000010">
    <property type="protein sequence ID" value="AAU47543.1"/>
    <property type="molecule type" value="Genomic_DNA"/>
</dbReference>
<dbReference type="RefSeq" id="WP_004192327.1">
    <property type="nucleotide sequence ID" value="NC_006348.1"/>
</dbReference>
<dbReference type="RefSeq" id="YP_102995.1">
    <property type="nucleotide sequence ID" value="NC_006348.1"/>
</dbReference>
<dbReference type="SMR" id="Q62JX4"/>
<dbReference type="KEGG" id="bma:BMA1335"/>
<dbReference type="PATRIC" id="fig|243160.12.peg.1373"/>
<dbReference type="eggNOG" id="COG3705">
    <property type="taxonomic scope" value="Bacteria"/>
</dbReference>
<dbReference type="HOGENOM" id="CLU_025113_0_1_4"/>
<dbReference type="UniPathway" id="UPA00031">
    <property type="reaction ID" value="UER00006"/>
</dbReference>
<dbReference type="Proteomes" id="UP000006693">
    <property type="component" value="Chromosome 1"/>
</dbReference>
<dbReference type="GO" id="GO:0005737">
    <property type="term" value="C:cytoplasm"/>
    <property type="evidence" value="ECO:0007669"/>
    <property type="project" value="UniProtKB-SubCell"/>
</dbReference>
<dbReference type="GO" id="GO:0004821">
    <property type="term" value="F:histidine-tRNA ligase activity"/>
    <property type="evidence" value="ECO:0007669"/>
    <property type="project" value="TreeGrafter"/>
</dbReference>
<dbReference type="GO" id="GO:0006427">
    <property type="term" value="P:histidyl-tRNA aminoacylation"/>
    <property type="evidence" value="ECO:0007669"/>
    <property type="project" value="TreeGrafter"/>
</dbReference>
<dbReference type="GO" id="GO:0000105">
    <property type="term" value="P:L-histidine biosynthetic process"/>
    <property type="evidence" value="ECO:0007669"/>
    <property type="project" value="UniProtKB-UniRule"/>
</dbReference>
<dbReference type="CDD" id="cd00773">
    <property type="entry name" value="HisRS-like_core"/>
    <property type="match status" value="1"/>
</dbReference>
<dbReference type="Gene3D" id="3.30.930.10">
    <property type="entry name" value="Bira Bifunctional Protein, Domain 2"/>
    <property type="match status" value="1"/>
</dbReference>
<dbReference type="HAMAP" id="MF_00125">
    <property type="entry name" value="HisZ"/>
    <property type="match status" value="1"/>
</dbReference>
<dbReference type="InterPro" id="IPR045864">
    <property type="entry name" value="aa-tRNA-synth_II/BPL/LPL"/>
</dbReference>
<dbReference type="InterPro" id="IPR041715">
    <property type="entry name" value="HisRS-like_core"/>
</dbReference>
<dbReference type="InterPro" id="IPR004516">
    <property type="entry name" value="HisRS/HisZ"/>
</dbReference>
<dbReference type="InterPro" id="IPR004517">
    <property type="entry name" value="HisZ"/>
</dbReference>
<dbReference type="NCBIfam" id="TIGR00443">
    <property type="entry name" value="hisZ_biosyn_reg"/>
    <property type="match status" value="1"/>
</dbReference>
<dbReference type="NCBIfam" id="NF008935">
    <property type="entry name" value="PRK12292.1-1"/>
    <property type="match status" value="1"/>
</dbReference>
<dbReference type="NCBIfam" id="NF009086">
    <property type="entry name" value="PRK12421.1"/>
    <property type="match status" value="1"/>
</dbReference>
<dbReference type="PANTHER" id="PTHR43707:SF1">
    <property type="entry name" value="HISTIDINE--TRNA LIGASE, MITOCHONDRIAL-RELATED"/>
    <property type="match status" value="1"/>
</dbReference>
<dbReference type="PANTHER" id="PTHR43707">
    <property type="entry name" value="HISTIDYL-TRNA SYNTHETASE"/>
    <property type="match status" value="1"/>
</dbReference>
<dbReference type="Pfam" id="PF13393">
    <property type="entry name" value="tRNA-synt_His"/>
    <property type="match status" value="1"/>
</dbReference>
<dbReference type="PIRSF" id="PIRSF001549">
    <property type="entry name" value="His-tRNA_synth"/>
    <property type="match status" value="1"/>
</dbReference>
<dbReference type="SUPFAM" id="SSF55681">
    <property type="entry name" value="Class II aaRS and biotin synthetases"/>
    <property type="match status" value="1"/>
</dbReference>
<accession>Q62JX4</accession>
<keyword id="KW-0028">Amino-acid biosynthesis</keyword>
<keyword id="KW-0963">Cytoplasm</keyword>
<keyword id="KW-0368">Histidine biosynthesis</keyword>
<keyword id="KW-1185">Reference proteome</keyword>
<organism>
    <name type="scientific">Burkholderia mallei (strain ATCC 23344)</name>
    <dbReference type="NCBI Taxonomy" id="243160"/>
    <lineage>
        <taxon>Bacteria</taxon>
        <taxon>Pseudomonadati</taxon>
        <taxon>Pseudomonadota</taxon>
        <taxon>Betaproteobacteria</taxon>
        <taxon>Burkholderiales</taxon>
        <taxon>Burkholderiaceae</taxon>
        <taxon>Burkholderia</taxon>
        <taxon>pseudomallei group</taxon>
    </lineage>
</organism>
<gene>
    <name evidence="1" type="primary">hisZ</name>
    <name type="ordered locus">BMA1335</name>
</gene>
<proteinExistence type="inferred from homology"/>
<evidence type="ECO:0000255" key="1">
    <source>
        <dbReference type="HAMAP-Rule" id="MF_00125"/>
    </source>
</evidence>